<evidence type="ECO:0000255" key="1">
    <source>
        <dbReference type="HAMAP-Rule" id="MF_01815"/>
    </source>
</evidence>
<geneLocation type="plasmid">
    <name>SCP1</name>
</geneLocation>
<comment type="function">
    <text evidence="1">Catalyzes the condensation reaction of fatty acid synthesis by the addition to an acyl acceptor of two carbons from malonyl-ACP. Catalyzes the first condensation reaction which initiates fatty acid synthesis and may therefore play a role in governing the total rate of fatty acid production. Possesses both acetoacetyl-ACP synthase and acetyl transacylase activities. Its substrate specificity determines the biosynthesis of branched-chain and/or straight-chain of fatty acids.</text>
</comment>
<comment type="catalytic activity">
    <reaction evidence="1">
        <text>malonyl-[ACP] + acetyl-CoA + H(+) = 3-oxobutanoyl-[ACP] + CO2 + CoA</text>
        <dbReference type="Rhea" id="RHEA:12080"/>
        <dbReference type="Rhea" id="RHEA-COMP:9623"/>
        <dbReference type="Rhea" id="RHEA-COMP:9625"/>
        <dbReference type="ChEBI" id="CHEBI:15378"/>
        <dbReference type="ChEBI" id="CHEBI:16526"/>
        <dbReference type="ChEBI" id="CHEBI:57287"/>
        <dbReference type="ChEBI" id="CHEBI:57288"/>
        <dbReference type="ChEBI" id="CHEBI:78449"/>
        <dbReference type="ChEBI" id="CHEBI:78450"/>
        <dbReference type="EC" id="2.3.1.180"/>
    </reaction>
</comment>
<comment type="pathway">
    <text evidence="1">Lipid metabolism; fatty acid biosynthesis.</text>
</comment>
<comment type="subunit">
    <text evidence="1">Homodimer.</text>
</comment>
<comment type="subcellular location">
    <subcellularLocation>
        <location evidence="1">Cytoplasm</location>
    </subcellularLocation>
</comment>
<comment type="domain">
    <text evidence="1">The last Arg residue of the ACP-binding site is essential for the weak association between ACP/AcpP and FabH.</text>
</comment>
<comment type="similarity">
    <text evidence="1">Belongs to the thiolase-like superfamily. FabH family.</text>
</comment>
<proteinExistence type="inferred from homology"/>
<feature type="chain" id="PRO_0000110487" description="Beta-ketoacyl-[acyl-carrier-protein] synthase III 5">
    <location>
        <begin position="1"/>
        <end position="332"/>
    </location>
</feature>
<feature type="region of interest" description="ACP-binding" evidence="1">
    <location>
        <begin position="254"/>
        <end position="258"/>
    </location>
</feature>
<feature type="active site" evidence="1">
    <location>
        <position position="111"/>
    </location>
</feature>
<feature type="active site" evidence="1">
    <location>
        <position position="253"/>
    </location>
</feature>
<feature type="active site" evidence="1">
    <location>
        <position position="283"/>
    </location>
</feature>
<dbReference type="EC" id="2.3.1.180" evidence="1"/>
<dbReference type="EMBL" id="AJ276673">
    <property type="protein sequence ID" value="CAB82875.1"/>
    <property type="molecule type" value="Genomic_DNA"/>
</dbReference>
<dbReference type="EMBL" id="AL589148">
    <property type="protein sequence ID" value="CAC36759.1"/>
    <property type="molecule type" value="Genomic_DNA"/>
</dbReference>
<dbReference type="RefSeq" id="NP_639843.1">
    <property type="nucleotide sequence ID" value="NC_003903.1"/>
</dbReference>
<dbReference type="SMR" id="Q9JN82"/>
<dbReference type="STRING" id="100226.gene:17765743"/>
<dbReference type="KEGG" id="sco:SCP1.233B"/>
<dbReference type="PATRIC" id="fig|100226.15.peg.8180"/>
<dbReference type="HOGENOM" id="CLU_039592_4_0_11"/>
<dbReference type="InParanoid" id="Q9JN82"/>
<dbReference type="OrthoDB" id="9815506at2"/>
<dbReference type="PhylomeDB" id="Q9JN82"/>
<dbReference type="UniPathway" id="UPA00094"/>
<dbReference type="Proteomes" id="UP000001973">
    <property type="component" value="Plasmid SCP1"/>
</dbReference>
<dbReference type="GO" id="GO:0005737">
    <property type="term" value="C:cytoplasm"/>
    <property type="evidence" value="ECO:0007669"/>
    <property type="project" value="UniProtKB-SubCell"/>
</dbReference>
<dbReference type="GO" id="GO:0004315">
    <property type="term" value="F:3-oxoacyl-[acyl-carrier-protein] synthase activity"/>
    <property type="evidence" value="ECO:0007669"/>
    <property type="project" value="InterPro"/>
</dbReference>
<dbReference type="GO" id="GO:0033818">
    <property type="term" value="F:beta-ketoacyl-acyl-carrier-protein synthase III activity"/>
    <property type="evidence" value="ECO:0007669"/>
    <property type="project" value="UniProtKB-UniRule"/>
</dbReference>
<dbReference type="GO" id="GO:0006633">
    <property type="term" value="P:fatty acid biosynthetic process"/>
    <property type="evidence" value="ECO:0007669"/>
    <property type="project" value="UniProtKB-UniRule"/>
</dbReference>
<dbReference type="GO" id="GO:0044550">
    <property type="term" value="P:secondary metabolite biosynthetic process"/>
    <property type="evidence" value="ECO:0000318"/>
    <property type="project" value="GO_Central"/>
</dbReference>
<dbReference type="CDD" id="cd00830">
    <property type="entry name" value="KAS_III"/>
    <property type="match status" value="1"/>
</dbReference>
<dbReference type="FunFam" id="3.40.47.10:FF:000004">
    <property type="entry name" value="3-oxoacyl-[acyl-carrier-protein] synthase 3"/>
    <property type="match status" value="1"/>
</dbReference>
<dbReference type="Gene3D" id="3.40.47.10">
    <property type="match status" value="1"/>
</dbReference>
<dbReference type="HAMAP" id="MF_01815">
    <property type="entry name" value="FabH"/>
    <property type="match status" value="1"/>
</dbReference>
<dbReference type="InterPro" id="IPR013747">
    <property type="entry name" value="ACP_syn_III_C"/>
</dbReference>
<dbReference type="InterPro" id="IPR013751">
    <property type="entry name" value="ACP_syn_III_N"/>
</dbReference>
<dbReference type="InterPro" id="IPR004655">
    <property type="entry name" value="FabH"/>
</dbReference>
<dbReference type="InterPro" id="IPR016039">
    <property type="entry name" value="Thiolase-like"/>
</dbReference>
<dbReference type="NCBIfam" id="TIGR00747">
    <property type="entry name" value="fabH"/>
    <property type="match status" value="1"/>
</dbReference>
<dbReference type="NCBIfam" id="NF006829">
    <property type="entry name" value="PRK09352.1"/>
    <property type="match status" value="1"/>
</dbReference>
<dbReference type="PANTHER" id="PTHR34069">
    <property type="entry name" value="3-OXOACYL-[ACYL-CARRIER-PROTEIN] SYNTHASE 3"/>
    <property type="match status" value="1"/>
</dbReference>
<dbReference type="PANTHER" id="PTHR34069:SF2">
    <property type="entry name" value="BETA-KETOACYL-[ACYL-CARRIER-PROTEIN] SYNTHASE III"/>
    <property type="match status" value="1"/>
</dbReference>
<dbReference type="Pfam" id="PF08545">
    <property type="entry name" value="ACP_syn_III"/>
    <property type="match status" value="1"/>
</dbReference>
<dbReference type="Pfam" id="PF08541">
    <property type="entry name" value="ACP_syn_III_C"/>
    <property type="match status" value="1"/>
</dbReference>
<dbReference type="SUPFAM" id="SSF53901">
    <property type="entry name" value="Thiolase-like"/>
    <property type="match status" value="1"/>
</dbReference>
<organism>
    <name type="scientific">Streptomyces coelicolor (strain ATCC BAA-471 / A3(2) / M145)</name>
    <dbReference type="NCBI Taxonomy" id="100226"/>
    <lineage>
        <taxon>Bacteria</taxon>
        <taxon>Bacillati</taxon>
        <taxon>Actinomycetota</taxon>
        <taxon>Actinomycetes</taxon>
        <taxon>Kitasatosporales</taxon>
        <taxon>Streptomycetaceae</taxon>
        <taxon>Streptomyces</taxon>
        <taxon>Streptomyces albidoflavus group</taxon>
    </lineage>
</organism>
<accession>Q9JN82</accession>
<protein>
    <recommendedName>
        <fullName evidence="1">Beta-ketoacyl-[acyl-carrier-protein] synthase III 5</fullName>
        <shortName evidence="1">Beta-ketoacyl-ACP synthase III 5</shortName>
        <shortName evidence="1">KAS III 5</shortName>
        <ecNumber evidence="1">2.3.1.180</ecNumber>
    </recommendedName>
    <alternativeName>
        <fullName evidence="1">3-oxoacyl-[acyl-carrier-protein] synthase 3 5</fullName>
    </alternativeName>
    <alternativeName>
        <fullName evidence="1">3-oxoacyl-[acyl-carrier-protein] synthase III 5</fullName>
    </alternativeName>
</protein>
<keyword id="KW-0012">Acyltransferase</keyword>
<keyword id="KW-0963">Cytoplasm</keyword>
<keyword id="KW-0275">Fatty acid biosynthesis</keyword>
<keyword id="KW-0276">Fatty acid metabolism</keyword>
<keyword id="KW-0444">Lipid biosynthesis</keyword>
<keyword id="KW-0443">Lipid metabolism</keyword>
<keyword id="KW-0511">Multifunctional enzyme</keyword>
<keyword id="KW-0614">Plasmid</keyword>
<keyword id="KW-1185">Reference proteome</keyword>
<keyword id="KW-0808">Transferase</keyword>
<reference key="1">
    <citation type="submission" date="2000-03" db="EMBL/GenBank/DDBJ databases">
        <title>Genes involved in methylenomycin biosynthesis from plasmid SCP1 of Streptomyces coelicolor A3(2).</title>
        <authorList>
            <person name="Bruton C.J."/>
            <person name="Wietzorrek A."/>
            <person name="Hartley N."/>
            <person name="Woodburn L."/>
            <person name="Chater K.F."/>
        </authorList>
    </citation>
    <scope>NUCLEOTIDE SEQUENCE [GENOMIC DNA]</scope>
    <source>
        <strain>A3(2) / NRRL B-16638</strain>
        <plasmid>SCP1</plasmid>
    </source>
</reference>
<reference key="2">
    <citation type="journal article" date="2002" name="Nature">
        <title>Complete genome sequence of the model actinomycete Streptomyces coelicolor A3(2).</title>
        <authorList>
            <person name="Bentley S.D."/>
            <person name="Chater K.F."/>
            <person name="Cerdeno-Tarraga A.-M."/>
            <person name="Challis G.L."/>
            <person name="Thomson N.R."/>
            <person name="James K.D."/>
            <person name="Harris D.E."/>
            <person name="Quail M.A."/>
            <person name="Kieser H."/>
            <person name="Harper D."/>
            <person name="Bateman A."/>
            <person name="Brown S."/>
            <person name="Chandra G."/>
            <person name="Chen C.W."/>
            <person name="Collins M."/>
            <person name="Cronin A."/>
            <person name="Fraser A."/>
            <person name="Goble A."/>
            <person name="Hidalgo J."/>
            <person name="Hornsby T."/>
            <person name="Howarth S."/>
            <person name="Huang C.-H."/>
            <person name="Kieser T."/>
            <person name="Larke L."/>
            <person name="Murphy L.D."/>
            <person name="Oliver K."/>
            <person name="O'Neil S."/>
            <person name="Rabbinowitsch E."/>
            <person name="Rajandream M.A."/>
            <person name="Rutherford K.M."/>
            <person name="Rutter S."/>
            <person name="Seeger K."/>
            <person name="Saunders D."/>
            <person name="Sharp S."/>
            <person name="Squares R."/>
            <person name="Squares S."/>
            <person name="Taylor K."/>
            <person name="Warren T."/>
            <person name="Wietzorrek A."/>
            <person name="Woodward J.R."/>
            <person name="Barrell B.G."/>
            <person name="Parkhill J."/>
            <person name="Hopwood D.A."/>
        </authorList>
    </citation>
    <scope>NUCLEOTIDE SEQUENCE [LARGE SCALE GENOMIC DNA]</scope>
    <source>
        <strain>ATCC BAA-471 / A3(2) / M145</strain>
    </source>
</reference>
<sequence length="332" mass="34016">MSGAGVLAGLGTALPARLVTNEELSRHLDTDDEWIRSRTGIGQRYWSDGASTGDLAVEAGQRALKAAGTDTVDLVVLATTTPDHPCPATAPDVADRLGLSGVAAYDIAAVCSGFIYGLASAVAHITAGLVGSALVIGAETYSTILDPLDRTTSVIFGDGAGAVVLRSGSVDERGAFLGFDLGSDGALKDLIVIPGGGSRERAAAERPQPAGAYFTMQGKPVFRHAVTRMTSSAGALLDRTGWSPASVDRFVGHQANARILHAVADQLRIDGARTVIDLDRVGNTSAASIPLALSRACGEGLLSPGDRVLLSAFGGGLTWGSTALLWPDITAL</sequence>
<name>FABH5_STRCO</name>
<gene>
    <name evidence="1" type="primary">fabH5</name>
    <name type="synonym">mmyC</name>
    <name type="ordered locus">SCP1.233.2</name>
    <name type="ORF">SCP1.233B</name>
</gene>